<feature type="chain" id="PRO_0000379562" description="Putrescine aminotransferase">
    <location>
        <begin position="1"/>
        <end position="459"/>
    </location>
</feature>
<feature type="binding site" description="in other chain" evidence="1">
    <location>
        <begin position="150"/>
        <end position="151"/>
    </location>
    <ligand>
        <name>pyridoxal 5'-phosphate</name>
        <dbReference type="ChEBI" id="CHEBI:597326"/>
        <note>ligand shared between dimeric partners</note>
    </ligand>
</feature>
<feature type="binding site" description="in other chain" evidence="1">
    <location>
        <position position="274"/>
    </location>
    <ligand>
        <name>pyridoxal 5'-phosphate</name>
        <dbReference type="ChEBI" id="CHEBI:597326"/>
        <note>ligand shared between dimeric partners</note>
    </ligand>
</feature>
<feature type="binding site" evidence="1">
    <location>
        <position position="332"/>
    </location>
    <ligand>
        <name>pyridoxal 5'-phosphate</name>
        <dbReference type="ChEBI" id="CHEBI:597326"/>
        <note>ligand shared between dimeric partners</note>
    </ligand>
</feature>
<feature type="modified residue" description="N6-(pyridoxal phosphate)lysine" evidence="1">
    <location>
        <position position="300"/>
    </location>
</feature>
<reference key="1">
    <citation type="journal article" date="2008" name="Genome Res.">
        <title>Comparative genome analysis of Salmonella enteritidis PT4 and Salmonella gallinarum 287/91 provides insights into evolutionary and host adaptation pathways.</title>
        <authorList>
            <person name="Thomson N.R."/>
            <person name="Clayton D.J."/>
            <person name="Windhorst D."/>
            <person name="Vernikos G."/>
            <person name="Davidson S."/>
            <person name="Churcher C."/>
            <person name="Quail M.A."/>
            <person name="Stevens M."/>
            <person name="Jones M.A."/>
            <person name="Watson M."/>
            <person name="Barron A."/>
            <person name="Layton A."/>
            <person name="Pickard D."/>
            <person name="Kingsley R.A."/>
            <person name="Bignell A."/>
            <person name="Clark L."/>
            <person name="Harris B."/>
            <person name="Ormond D."/>
            <person name="Abdellah Z."/>
            <person name="Brooks K."/>
            <person name="Cherevach I."/>
            <person name="Chillingworth T."/>
            <person name="Woodward J."/>
            <person name="Norberczak H."/>
            <person name="Lord A."/>
            <person name="Arrowsmith C."/>
            <person name="Jagels K."/>
            <person name="Moule S."/>
            <person name="Mungall K."/>
            <person name="Saunders M."/>
            <person name="Whitehead S."/>
            <person name="Chabalgoity J.A."/>
            <person name="Maskell D."/>
            <person name="Humphreys T."/>
            <person name="Roberts M."/>
            <person name="Barrow P.A."/>
            <person name="Dougan G."/>
            <person name="Parkhill J."/>
        </authorList>
    </citation>
    <scope>NUCLEOTIDE SEQUENCE [LARGE SCALE GENOMIC DNA]</scope>
    <source>
        <strain>P125109</strain>
    </source>
</reference>
<sequence length="459" mass="49677">MNRLPSSASALACSAHALNLIEKRTLNHEEMKALNREVIDYFKEHVNPGFLEYRKSVTAGGDYGAVEWQAGSLNTLVDTQGQEFIDCLGGFGIFNVGHRNPVVVSAVQNQLAKQPLHSQELLDPLRAMLAKTLAALTPGKLKYSFFCNSGTESVEAALKLAKAYQSPRGKFTFIATSGAFHGKSLGALSATAKSTFRRPFMPLLPGFRHVPFGNIDAMSMAFSEGKKTGDEIAAVILEPIQGEGGVILPPQGYLTEVRKLCDEFGALMILDEVQTGMGRTGKMFACEHENVQPDILCLAKALGGGVMPIGATIATEEVFSVLFDNPFLHTTTFGGNPLACAAALATINVLLEQNLPAQAEQKGDTLLDGFRQLAREYPNLVHDARGKGMLIAIEFVDNETGYRFASEMFRQRVLVAGTLNNAKTIRIEPPLTLTIELCEQVLKSARNALAAMQVSVEEV</sequence>
<evidence type="ECO:0000255" key="1">
    <source>
        <dbReference type="HAMAP-Rule" id="MF_01276"/>
    </source>
</evidence>
<evidence type="ECO:0000305" key="2"/>
<gene>
    <name evidence="1" type="primary">patA</name>
    <name type="ordered locus">SEN3060</name>
</gene>
<keyword id="KW-0032">Aminotransferase</keyword>
<keyword id="KW-0663">Pyridoxal phosphate</keyword>
<keyword id="KW-0808">Transferase</keyword>
<proteinExistence type="inferred from homology"/>
<name>PAT_SALEP</name>
<organism>
    <name type="scientific">Salmonella enteritidis PT4 (strain P125109)</name>
    <dbReference type="NCBI Taxonomy" id="550537"/>
    <lineage>
        <taxon>Bacteria</taxon>
        <taxon>Pseudomonadati</taxon>
        <taxon>Pseudomonadota</taxon>
        <taxon>Gammaproteobacteria</taxon>
        <taxon>Enterobacterales</taxon>
        <taxon>Enterobacteriaceae</taxon>
        <taxon>Salmonella</taxon>
    </lineage>
</organism>
<accession>B5QZ53</accession>
<protein>
    <recommendedName>
        <fullName evidence="1">Putrescine aminotransferase</fullName>
        <shortName evidence="1">PAT</shortName>
        <shortName evidence="1">PATase</shortName>
        <ecNumber evidence="1">2.6.1.82</ecNumber>
    </recommendedName>
    <alternativeName>
        <fullName evidence="1">Cadaverine transaminase</fullName>
    </alternativeName>
    <alternativeName>
        <fullName evidence="1">Diamine transaminase</fullName>
        <ecNumber evidence="1">2.6.1.29</ecNumber>
    </alternativeName>
    <alternativeName>
        <fullName evidence="1">Putrescine transaminase</fullName>
    </alternativeName>
    <alternativeName>
        <fullName evidence="1">Putrescine--2-oxoglutaric acid transaminase</fullName>
    </alternativeName>
</protein>
<dbReference type="EC" id="2.6.1.82" evidence="1"/>
<dbReference type="EC" id="2.6.1.29" evidence="1"/>
<dbReference type="EMBL" id="AM933172">
    <property type="protein sequence ID" value="CAR34636.1"/>
    <property type="status" value="ALT_INIT"/>
    <property type="molecule type" value="Genomic_DNA"/>
</dbReference>
<dbReference type="SMR" id="B5QZ53"/>
<dbReference type="KEGG" id="set:SEN3060"/>
<dbReference type="HOGENOM" id="CLU_016922_10_0_6"/>
<dbReference type="UniPathway" id="UPA00188">
    <property type="reaction ID" value="UER00290"/>
</dbReference>
<dbReference type="Proteomes" id="UP000000613">
    <property type="component" value="Chromosome"/>
</dbReference>
<dbReference type="GO" id="GO:0019161">
    <property type="term" value="F:diamine transaminase activity"/>
    <property type="evidence" value="ECO:0007669"/>
    <property type="project" value="UniProtKB-EC"/>
</dbReference>
<dbReference type="GO" id="GO:0042802">
    <property type="term" value="F:identical protein binding"/>
    <property type="evidence" value="ECO:0007669"/>
    <property type="project" value="TreeGrafter"/>
</dbReference>
<dbReference type="GO" id="GO:0033094">
    <property type="term" value="F:putrescine--2-oxoglutarate transaminase activity"/>
    <property type="evidence" value="ECO:0007669"/>
    <property type="project" value="UniProtKB-UniRule"/>
</dbReference>
<dbReference type="GO" id="GO:0030170">
    <property type="term" value="F:pyridoxal phosphate binding"/>
    <property type="evidence" value="ECO:0007669"/>
    <property type="project" value="UniProtKB-UniRule"/>
</dbReference>
<dbReference type="GO" id="GO:0019477">
    <property type="term" value="P:L-lysine catabolic process"/>
    <property type="evidence" value="ECO:0007669"/>
    <property type="project" value="UniProtKB-UniRule"/>
</dbReference>
<dbReference type="GO" id="GO:0009447">
    <property type="term" value="P:putrescine catabolic process"/>
    <property type="evidence" value="ECO:0007669"/>
    <property type="project" value="UniProtKB-UniRule"/>
</dbReference>
<dbReference type="CDD" id="cd00610">
    <property type="entry name" value="OAT_like"/>
    <property type="match status" value="1"/>
</dbReference>
<dbReference type="FunFam" id="3.40.640.10:FF:000004">
    <property type="entry name" value="Acetylornithine aminotransferase"/>
    <property type="match status" value="1"/>
</dbReference>
<dbReference type="Gene3D" id="3.90.1150.10">
    <property type="entry name" value="Aspartate Aminotransferase, domain 1"/>
    <property type="match status" value="1"/>
</dbReference>
<dbReference type="Gene3D" id="3.40.640.10">
    <property type="entry name" value="Type I PLP-dependent aspartate aminotransferase-like (Major domain)"/>
    <property type="match status" value="1"/>
</dbReference>
<dbReference type="HAMAP" id="MF_01276">
    <property type="entry name" value="Putres_aminotrans_3"/>
    <property type="match status" value="1"/>
</dbReference>
<dbReference type="InterPro" id="IPR005814">
    <property type="entry name" value="Aminotrans_3"/>
</dbReference>
<dbReference type="InterPro" id="IPR049704">
    <property type="entry name" value="Aminotrans_3_PPA_site"/>
</dbReference>
<dbReference type="InterPro" id="IPR050103">
    <property type="entry name" value="Class-III_PLP-dep_AT"/>
</dbReference>
<dbReference type="InterPro" id="IPR017747">
    <property type="entry name" value="Putrescine_aminotransferase"/>
</dbReference>
<dbReference type="InterPro" id="IPR015424">
    <property type="entry name" value="PyrdxlP-dep_Trfase"/>
</dbReference>
<dbReference type="InterPro" id="IPR015421">
    <property type="entry name" value="PyrdxlP-dep_Trfase_major"/>
</dbReference>
<dbReference type="InterPro" id="IPR015422">
    <property type="entry name" value="PyrdxlP-dep_Trfase_small"/>
</dbReference>
<dbReference type="NCBIfam" id="NF008570">
    <property type="entry name" value="PRK11522.1"/>
    <property type="match status" value="1"/>
</dbReference>
<dbReference type="NCBIfam" id="TIGR03372">
    <property type="entry name" value="putres_am_tran"/>
    <property type="match status" value="1"/>
</dbReference>
<dbReference type="PANTHER" id="PTHR11986">
    <property type="entry name" value="AMINOTRANSFERASE CLASS III"/>
    <property type="match status" value="1"/>
</dbReference>
<dbReference type="PANTHER" id="PTHR11986:SF112">
    <property type="entry name" value="PUTRESCINE AMINOTRANSFERASE"/>
    <property type="match status" value="1"/>
</dbReference>
<dbReference type="Pfam" id="PF00202">
    <property type="entry name" value="Aminotran_3"/>
    <property type="match status" value="1"/>
</dbReference>
<dbReference type="PIRSF" id="PIRSF000521">
    <property type="entry name" value="Transaminase_4ab_Lys_Orn"/>
    <property type="match status" value="1"/>
</dbReference>
<dbReference type="SUPFAM" id="SSF53383">
    <property type="entry name" value="PLP-dependent transferases"/>
    <property type="match status" value="1"/>
</dbReference>
<dbReference type="PROSITE" id="PS00600">
    <property type="entry name" value="AA_TRANSFER_CLASS_3"/>
    <property type="match status" value="1"/>
</dbReference>
<comment type="function">
    <text evidence="1">Catalyzes the aminotransferase reaction from putrescine to 2-oxoglutarate, leading to glutamate and 4-aminobutanal, which spontaneously cyclizes to form 1-pyrroline. This is the first step in one of two pathways for putrescine degradation, where putrescine is converted into 4-aminobutanoate (gamma-aminobutyrate or GABA) via 4-aminobutanal. Also functions as a cadaverine transaminase in a a L-lysine degradation pathway to succinate that proceeds via cadaverine, glutarate and L-2-hydroxyglutarate.</text>
</comment>
<comment type="catalytic activity">
    <reaction evidence="1">
        <text>an alkane-alpha,omega-diamine + 2-oxoglutarate = an omega-aminoaldehyde + L-glutamate</text>
        <dbReference type="Rhea" id="RHEA:18217"/>
        <dbReference type="Rhea" id="RHEA-COMP:9766"/>
        <dbReference type="Rhea" id="RHEA-COMP:12750"/>
        <dbReference type="ChEBI" id="CHEBI:16810"/>
        <dbReference type="ChEBI" id="CHEBI:29985"/>
        <dbReference type="ChEBI" id="CHEBI:70977"/>
        <dbReference type="ChEBI" id="CHEBI:133427"/>
        <dbReference type="EC" id="2.6.1.29"/>
    </reaction>
    <physiologicalReaction direction="left-to-right" evidence="1">
        <dbReference type="Rhea" id="RHEA:18218"/>
    </physiologicalReaction>
</comment>
<comment type="catalytic activity">
    <reaction evidence="1">
        <text>putrescine + 2-oxoglutarate = 1-pyrroline + L-glutamate + H2O</text>
        <dbReference type="Rhea" id="RHEA:12268"/>
        <dbReference type="ChEBI" id="CHEBI:15377"/>
        <dbReference type="ChEBI" id="CHEBI:16810"/>
        <dbReference type="ChEBI" id="CHEBI:29985"/>
        <dbReference type="ChEBI" id="CHEBI:36781"/>
        <dbReference type="ChEBI" id="CHEBI:326268"/>
        <dbReference type="EC" id="2.6.1.82"/>
    </reaction>
    <physiologicalReaction direction="left-to-right" evidence="1">
        <dbReference type="Rhea" id="RHEA:12269"/>
    </physiologicalReaction>
</comment>
<comment type="catalytic activity">
    <reaction evidence="1">
        <text>cadaverine + 2-oxoglutarate = 5-aminopentanal + L-glutamate</text>
        <dbReference type="Rhea" id="RHEA:61624"/>
        <dbReference type="ChEBI" id="CHEBI:16810"/>
        <dbReference type="ChEBI" id="CHEBI:29985"/>
        <dbReference type="ChEBI" id="CHEBI:58384"/>
        <dbReference type="ChEBI" id="CHEBI:144896"/>
    </reaction>
    <physiologicalReaction direction="left-to-right" evidence="1">
        <dbReference type="Rhea" id="RHEA:61625"/>
    </physiologicalReaction>
</comment>
<comment type="cofactor">
    <cofactor evidence="1">
        <name>pyridoxal 5'-phosphate</name>
        <dbReference type="ChEBI" id="CHEBI:597326"/>
    </cofactor>
</comment>
<comment type="pathway">
    <text evidence="1">Amine and polyamine degradation; putrescine degradation; 4-aminobutanal from putrescine (transaminase route): step 1/1.</text>
</comment>
<comment type="similarity">
    <text evidence="1">Belongs to the class-III pyridoxal-phosphate-dependent aminotransferase family. Putrescine aminotransferase subfamily.</text>
</comment>
<comment type="sequence caution" evidence="2">
    <conflict type="erroneous initiation">
        <sequence resource="EMBL-CDS" id="CAR34636"/>
    </conflict>
</comment>